<keyword id="KW-1185">Reference proteome</keyword>
<proteinExistence type="predicted"/>
<feature type="chain" id="PRO_0000283361" description="Putative F-box protein At1g76830">
    <location>
        <begin position="1"/>
        <end position="373"/>
    </location>
</feature>
<feature type="domain" description="F-box" evidence="1">
    <location>
        <begin position="4"/>
        <end position="49"/>
    </location>
</feature>
<evidence type="ECO:0000255" key="1">
    <source>
        <dbReference type="PROSITE-ProRule" id="PRU00080"/>
    </source>
</evidence>
<gene>
    <name type="ordered locus">At1g76830</name>
    <name type="ORF">F28O16.20</name>
</gene>
<accession>Q9SRD0</accession>
<organism>
    <name type="scientific">Arabidopsis thaliana</name>
    <name type="common">Mouse-ear cress</name>
    <dbReference type="NCBI Taxonomy" id="3702"/>
    <lineage>
        <taxon>Eukaryota</taxon>
        <taxon>Viridiplantae</taxon>
        <taxon>Streptophyta</taxon>
        <taxon>Embryophyta</taxon>
        <taxon>Tracheophyta</taxon>
        <taxon>Spermatophyta</taxon>
        <taxon>Magnoliopsida</taxon>
        <taxon>eudicotyledons</taxon>
        <taxon>Gunneridae</taxon>
        <taxon>Pentapetalae</taxon>
        <taxon>rosids</taxon>
        <taxon>malvids</taxon>
        <taxon>Brassicales</taxon>
        <taxon>Brassicaceae</taxon>
        <taxon>Camelineae</taxon>
        <taxon>Arabidopsis</taxon>
    </lineage>
</organism>
<sequence>MEGITSFENLPEELKREILLRMSPNSLVTCSRVSKKLASMIRTKSFKELYLSRSMRCPRVLFAANGTITPHVLFTSFQEKEKPLLSSGEQRIITSLQGEFLFSPPVRGLICLVERESARIVICNPGTTKFLALPIVEADETTRIITHLGYDEQKDVFKVLCTRTKPETPHLVLTVGSGKEPWREIVCKFPHTVIGAGVFYRGTLYYLAAFHSKSIIMTFDVRSETFMPITSPDGVDLNQGSWRLVNYSQQGGFALVNESRGFIYQSNGGDAYLETWVWNVDTRKWSMNSILIRKWKDYAQDNEDYDYRFRGTQGTYELVFAPIRVKEDGSLTVILYNTDTQAFRRSKVQMMGEGHEFRFVDTFLDHVDSTLLI</sequence>
<name>FB88_ARATH</name>
<reference key="1">
    <citation type="journal article" date="2000" name="Nature">
        <title>Sequence and analysis of chromosome 1 of the plant Arabidopsis thaliana.</title>
        <authorList>
            <person name="Theologis A."/>
            <person name="Ecker J.R."/>
            <person name="Palm C.J."/>
            <person name="Federspiel N.A."/>
            <person name="Kaul S."/>
            <person name="White O."/>
            <person name="Alonso J."/>
            <person name="Altafi H."/>
            <person name="Araujo R."/>
            <person name="Bowman C.L."/>
            <person name="Brooks S.Y."/>
            <person name="Buehler E."/>
            <person name="Chan A."/>
            <person name="Chao Q."/>
            <person name="Chen H."/>
            <person name="Cheuk R.F."/>
            <person name="Chin C.W."/>
            <person name="Chung M.K."/>
            <person name="Conn L."/>
            <person name="Conway A.B."/>
            <person name="Conway A.R."/>
            <person name="Creasy T.H."/>
            <person name="Dewar K."/>
            <person name="Dunn P."/>
            <person name="Etgu P."/>
            <person name="Feldblyum T.V."/>
            <person name="Feng J.-D."/>
            <person name="Fong B."/>
            <person name="Fujii C.Y."/>
            <person name="Gill J.E."/>
            <person name="Goldsmith A.D."/>
            <person name="Haas B."/>
            <person name="Hansen N.F."/>
            <person name="Hughes B."/>
            <person name="Huizar L."/>
            <person name="Hunter J.L."/>
            <person name="Jenkins J."/>
            <person name="Johnson-Hopson C."/>
            <person name="Khan S."/>
            <person name="Khaykin E."/>
            <person name="Kim C.J."/>
            <person name="Koo H.L."/>
            <person name="Kremenetskaia I."/>
            <person name="Kurtz D.B."/>
            <person name="Kwan A."/>
            <person name="Lam B."/>
            <person name="Langin-Hooper S."/>
            <person name="Lee A."/>
            <person name="Lee J.M."/>
            <person name="Lenz C.A."/>
            <person name="Li J.H."/>
            <person name="Li Y.-P."/>
            <person name="Lin X."/>
            <person name="Liu S.X."/>
            <person name="Liu Z.A."/>
            <person name="Luros J.S."/>
            <person name="Maiti R."/>
            <person name="Marziali A."/>
            <person name="Militscher J."/>
            <person name="Miranda M."/>
            <person name="Nguyen M."/>
            <person name="Nierman W.C."/>
            <person name="Osborne B.I."/>
            <person name="Pai G."/>
            <person name="Peterson J."/>
            <person name="Pham P.K."/>
            <person name="Rizzo M."/>
            <person name="Rooney T."/>
            <person name="Rowley D."/>
            <person name="Sakano H."/>
            <person name="Salzberg S.L."/>
            <person name="Schwartz J.R."/>
            <person name="Shinn P."/>
            <person name="Southwick A.M."/>
            <person name="Sun H."/>
            <person name="Tallon L.J."/>
            <person name="Tambunga G."/>
            <person name="Toriumi M.J."/>
            <person name="Town C.D."/>
            <person name="Utterback T."/>
            <person name="Van Aken S."/>
            <person name="Vaysberg M."/>
            <person name="Vysotskaia V.S."/>
            <person name="Walker M."/>
            <person name="Wu D."/>
            <person name="Yu G."/>
            <person name="Fraser C.M."/>
            <person name="Venter J.C."/>
            <person name="Davis R.W."/>
        </authorList>
    </citation>
    <scope>NUCLEOTIDE SEQUENCE [LARGE SCALE GENOMIC DNA]</scope>
    <source>
        <strain>cv. Columbia</strain>
    </source>
</reference>
<reference key="2">
    <citation type="journal article" date="2017" name="Plant J.">
        <title>Araport11: a complete reannotation of the Arabidopsis thaliana reference genome.</title>
        <authorList>
            <person name="Cheng C.Y."/>
            <person name="Krishnakumar V."/>
            <person name="Chan A.P."/>
            <person name="Thibaud-Nissen F."/>
            <person name="Schobel S."/>
            <person name="Town C.D."/>
        </authorList>
    </citation>
    <scope>GENOME REANNOTATION</scope>
    <source>
        <strain>cv. Columbia</strain>
    </source>
</reference>
<protein>
    <recommendedName>
        <fullName>Putative F-box protein At1g76830</fullName>
    </recommendedName>
</protein>
<dbReference type="EMBL" id="AC010718">
    <property type="protein sequence ID" value="AAF04444.1"/>
    <property type="molecule type" value="Genomic_DNA"/>
</dbReference>
<dbReference type="EMBL" id="CP002684">
    <property type="protein sequence ID" value="AEE35893.1"/>
    <property type="molecule type" value="Genomic_DNA"/>
</dbReference>
<dbReference type="PIR" id="A96797">
    <property type="entry name" value="A96797"/>
</dbReference>
<dbReference type="RefSeq" id="NP_177809.1">
    <property type="nucleotide sequence ID" value="NM_106334.2"/>
</dbReference>
<dbReference type="BioGRID" id="29237">
    <property type="interactions" value="3"/>
</dbReference>
<dbReference type="STRING" id="3702.Q9SRD0"/>
<dbReference type="PaxDb" id="3702-AT1G76830.1"/>
<dbReference type="EnsemblPlants" id="AT1G76830.1">
    <property type="protein sequence ID" value="AT1G76830.1"/>
    <property type="gene ID" value="AT1G76830"/>
</dbReference>
<dbReference type="GeneID" id="844018"/>
<dbReference type="Gramene" id="AT1G76830.1">
    <property type="protein sequence ID" value="AT1G76830.1"/>
    <property type="gene ID" value="AT1G76830"/>
</dbReference>
<dbReference type="KEGG" id="ath:AT1G76830"/>
<dbReference type="Araport" id="AT1G76830"/>
<dbReference type="TAIR" id="AT1G76830"/>
<dbReference type="HOGENOM" id="CLU_027176_8_1_1"/>
<dbReference type="InParanoid" id="Q9SRD0"/>
<dbReference type="PhylomeDB" id="Q9SRD0"/>
<dbReference type="PRO" id="PR:Q9SRD0"/>
<dbReference type="Proteomes" id="UP000006548">
    <property type="component" value="Chromosome 1"/>
</dbReference>
<dbReference type="ExpressionAtlas" id="Q9SRD0">
    <property type="expression patterns" value="baseline and differential"/>
</dbReference>
<dbReference type="InterPro" id="IPR013187">
    <property type="entry name" value="F-box-assoc_dom_typ3"/>
</dbReference>
<dbReference type="InterPro" id="IPR017451">
    <property type="entry name" value="F-box-assoc_interact_dom"/>
</dbReference>
<dbReference type="InterPro" id="IPR036047">
    <property type="entry name" value="F-box-like_dom_sf"/>
</dbReference>
<dbReference type="InterPro" id="IPR001810">
    <property type="entry name" value="F-box_dom"/>
</dbReference>
<dbReference type="NCBIfam" id="TIGR01640">
    <property type="entry name" value="F_box_assoc_1"/>
    <property type="match status" value="1"/>
</dbReference>
<dbReference type="PANTHER" id="PTHR31111">
    <property type="entry name" value="BNAA05G37150D PROTEIN-RELATED"/>
    <property type="match status" value="1"/>
</dbReference>
<dbReference type="PANTHER" id="PTHR31111:SF138">
    <property type="entry name" value="F-BOX ASSOCIATED DOMAIN-CONTAINING PROTEIN"/>
    <property type="match status" value="1"/>
</dbReference>
<dbReference type="Pfam" id="PF00646">
    <property type="entry name" value="F-box"/>
    <property type="match status" value="1"/>
</dbReference>
<dbReference type="Pfam" id="PF08268">
    <property type="entry name" value="FBA_3"/>
    <property type="match status" value="1"/>
</dbReference>
<dbReference type="SMART" id="SM00256">
    <property type="entry name" value="FBOX"/>
    <property type="match status" value="1"/>
</dbReference>
<dbReference type="SUPFAM" id="SSF81383">
    <property type="entry name" value="F-box domain"/>
    <property type="match status" value="1"/>
</dbReference>
<dbReference type="PROSITE" id="PS50181">
    <property type="entry name" value="FBOX"/>
    <property type="match status" value="1"/>
</dbReference>